<evidence type="ECO:0000255" key="1">
    <source>
        <dbReference type="HAMAP-Rule" id="MF_00364"/>
    </source>
</evidence>
<evidence type="ECO:0000305" key="2"/>
<proteinExistence type="inferred from homology"/>
<comment type="function">
    <text evidence="1">Plays a role in peptidoglycan recycling by cleaving the terminal beta-1,4-linked N-acetylglucosamine (GlcNAc) from peptide-linked peptidoglycan fragments, giving rise to free GlcNAc, anhydro-N-acetylmuramic acid and anhydro-N-acetylmuramic acid-linked peptides.</text>
</comment>
<comment type="catalytic activity">
    <reaction evidence="1">
        <text>Hydrolysis of terminal non-reducing N-acetyl-D-hexosamine residues in N-acetyl-beta-D-hexosaminides.</text>
        <dbReference type="EC" id="3.2.1.52"/>
    </reaction>
</comment>
<comment type="pathway">
    <text evidence="1">Cell wall biogenesis; peptidoglycan recycling.</text>
</comment>
<comment type="subunit">
    <text evidence="2">Monomer.</text>
</comment>
<comment type="subcellular location">
    <subcellularLocation>
        <location evidence="1">Cytoplasm</location>
    </subcellularLocation>
</comment>
<comment type="similarity">
    <text evidence="1">Belongs to the glycosyl hydrolase 3 family. NagZ subfamily.</text>
</comment>
<feature type="chain" id="PRO_0000210793" description="Beta-hexosaminidase">
    <location>
        <begin position="1"/>
        <end position="351"/>
    </location>
</feature>
<feature type="active site" description="Proton donor/acceptor" evidence="1">
    <location>
        <position position="177"/>
    </location>
</feature>
<feature type="active site" description="Nucleophile" evidence="1">
    <location>
        <position position="249"/>
    </location>
</feature>
<feature type="binding site" evidence="1">
    <location>
        <position position="62"/>
    </location>
    <ligand>
        <name>substrate</name>
    </ligand>
</feature>
<feature type="binding site" evidence="1">
    <location>
        <position position="70"/>
    </location>
    <ligand>
        <name>substrate</name>
    </ligand>
</feature>
<feature type="binding site" evidence="1">
    <location>
        <position position="134"/>
    </location>
    <ligand>
        <name>substrate</name>
    </ligand>
</feature>
<feature type="binding site" evidence="1">
    <location>
        <begin position="164"/>
        <end position="165"/>
    </location>
    <ligand>
        <name>substrate</name>
    </ligand>
</feature>
<feature type="site" description="Important for catalytic activity" evidence="1">
    <location>
        <position position="175"/>
    </location>
</feature>
<accession>Q9CPH0</accession>
<keyword id="KW-0131">Cell cycle</keyword>
<keyword id="KW-0132">Cell division</keyword>
<keyword id="KW-0133">Cell shape</keyword>
<keyword id="KW-0961">Cell wall biogenesis/degradation</keyword>
<keyword id="KW-0963">Cytoplasm</keyword>
<keyword id="KW-0326">Glycosidase</keyword>
<keyword id="KW-0378">Hydrolase</keyword>
<keyword id="KW-0573">Peptidoglycan synthesis</keyword>
<keyword id="KW-1185">Reference proteome</keyword>
<gene>
    <name evidence="1" type="primary">nagZ</name>
    <name type="ordered locus">PM0071</name>
</gene>
<protein>
    <recommendedName>
        <fullName evidence="1">Beta-hexosaminidase</fullName>
        <ecNumber evidence="1">3.2.1.52</ecNumber>
    </recommendedName>
    <alternativeName>
        <fullName evidence="1">Beta-N-acetylhexosaminidase</fullName>
    </alternativeName>
    <alternativeName>
        <fullName evidence="1">N-acetyl-beta-glucosaminidase</fullName>
    </alternativeName>
</protein>
<sequence>MSTLLIDLQGQELSQEEVELLSHPLVAGLILFTRNFHDRAQMQALIQSIRQRVKKPLLITVDQEGGRVQRFREGFTQLPAMQAFACLIDDPVQQTNMAQQAGWQMAAEMTALGIDLSFAPVLDLGHQCQAIGDRSFHSQAEMTLNLASAFIDGMHQVGMAATGKHFPGHGHVIADSHLETPYDERPKQQIFAQDIQPFQQLIQQNMLNAIMPAHVIYSQCDPQPASGSAYWLKQVLRQQLGFNGAIFSDDLGMKGAGFMGNFVQRCEQSLQAGCDLLLLCNEREGVIQVLDNLKLSETEPHFALRQQRLQQLFKRKTIRWSELEATSRWLENRKILTALQQRWLDNKANKH</sequence>
<reference key="1">
    <citation type="journal article" date="2001" name="Proc. Natl. Acad. Sci. U.S.A.">
        <title>Complete genomic sequence of Pasteurella multocida Pm70.</title>
        <authorList>
            <person name="May B.J."/>
            <person name="Zhang Q."/>
            <person name="Li L.L."/>
            <person name="Paustian M.L."/>
            <person name="Whittam T.S."/>
            <person name="Kapur V."/>
        </authorList>
    </citation>
    <scope>NUCLEOTIDE SEQUENCE [LARGE SCALE GENOMIC DNA]</scope>
    <source>
        <strain>Pm70</strain>
    </source>
</reference>
<dbReference type="EC" id="3.2.1.52" evidence="1"/>
<dbReference type="EMBL" id="AE004439">
    <property type="protein sequence ID" value="AAK02155.1"/>
    <property type="molecule type" value="Genomic_DNA"/>
</dbReference>
<dbReference type="RefSeq" id="WP_010906466.1">
    <property type="nucleotide sequence ID" value="NC_002663.1"/>
</dbReference>
<dbReference type="SMR" id="Q9CPH0"/>
<dbReference type="STRING" id="272843.PM0071"/>
<dbReference type="CAZy" id="GH3">
    <property type="family name" value="Glycoside Hydrolase Family 3"/>
</dbReference>
<dbReference type="EnsemblBacteria" id="AAK02155">
    <property type="protein sequence ID" value="AAK02155"/>
    <property type="gene ID" value="PM0071"/>
</dbReference>
<dbReference type="KEGG" id="pmu:PM0071"/>
<dbReference type="PATRIC" id="fig|272843.6.peg.73"/>
<dbReference type="HOGENOM" id="CLU_008392_0_0_6"/>
<dbReference type="OrthoDB" id="9786661at2"/>
<dbReference type="UniPathway" id="UPA00544"/>
<dbReference type="Proteomes" id="UP000000809">
    <property type="component" value="Chromosome"/>
</dbReference>
<dbReference type="GO" id="GO:0005737">
    <property type="term" value="C:cytoplasm"/>
    <property type="evidence" value="ECO:0007669"/>
    <property type="project" value="UniProtKB-SubCell"/>
</dbReference>
<dbReference type="GO" id="GO:0004563">
    <property type="term" value="F:beta-N-acetylhexosaminidase activity"/>
    <property type="evidence" value="ECO:0007669"/>
    <property type="project" value="UniProtKB-UniRule"/>
</dbReference>
<dbReference type="GO" id="GO:0005975">
    <property type="term" value="P:carbohydrate metabolic process"/>
    <property type="evidence" value="ECO:0007669"/>
    <property type="project" value="InterPro"/>
</dbReference>
<dbReference type="GO" id="GO:0051301">
    <property type="term" value="P:cell division"/>
    <property type="evidence" value="ECO:0007669"/>
    <property type="project" value="UniProtKB-KW"/>
</dbReference>
<dbReference type="GO" id="GO:0071555">
    <property type="term" value="P:cell wall organization"/>
    <property type="evidence" value="ECO:0007669"/>
    <property type="project" value="UniProtKB-KW"/>
</dbReference>
<dbReference type="GO" id="GO:0009252">
    <property type="term" value="P:peptidoglycan biosynthetic process"/>
    <property type="evidence" value="ECO:0007669"/>
    <property type="project" value="UniProtKB-KW"/>
</dbReference>
<dbReference type="GO" id="GO:0009254">
    <property type="term" value="P:peptidoglycan turnover"/>
    <property type="evidence" value="ECO:0007669"/>
    <property type="project" value="UniProtKB-UniRule"/>
</dbReference>
<dbReference type="GO" id="GO:0008360">
    <property type="term" value="P:regulation of cell shape"/>
    <property type="evidence" value="ECO:0007669"/>
    <property type="project" value="UniProtKB-KW"/>
</dbReference>
<dbReference type="FunFam" id="3.20.20.300:FF:000001">
    <property type="entry name" value="Beta-hexosaminidase"/>
    <property type="match status" value="1"/>
</dbReference>
<dbReference type="Gene3D" id="3.20.20.300">
    <property type="entry name" value="Glycoside hydrolase, family 3, N-terminal domain"/>
    <property type="match status" value="1"/>
</dbReference>
<dbReference type="HAMAP" id="MF_00364">
    <property type="entry name" value="NagZ"/>
    <property type="match status" value="1"/>
</dbReference>
<dbReference type="InterPro" id="IPR022956">
    <property type="entry name" value="Beta_hexosaminidase_bac"/>
</dbReference>
<dbReference type="InterPro" id="IPR001764">
    <property type="entry name" value="Glyco_hydro_3_N"/>
</dbReference>
<dbReference type="InterPro" id="IPR036962">
    <property type="entry name" value="Glyco_hydro_3_N_sf"/>
</dbReference>
<dbReference type="InterPro" id="IPR017853">
    <property type="entry name" value="Glycoside_hydrolase_SF"/>
</dbReference>
<dbReference type="InterPro" id="IPR050226">
    <property type="entry name" value="NagZ_Beta-hexosaminidase"/>
</dbReference>
<dbReference type="NCBIfam" id="NF003740">
    <property type="entry name" value="PRK05337.1"/>
    <property type="match status" value="1"/>
</dbReference>
<dbReference type="PANTHER" id="PTHR30480:SF13">
    <property type="entry name" value="BETA-HEXOSAMINIDASE"/>
    <property type="match status" value="1"/>
</dbReference>
<dbReference type="PANTHER" id="PTHR30480">
    <property type="entry name" value="BETA-HEXOSAMINIDASE-RELATED"/>
    <property type="match status" value="1"/>
</dbReference>
<dbReference type="Pfam" id="PF00933">
    <property type="entry name" value="Glyco_hydro_3"/>
    <property type="match status" value="1"/>
</dbReference>
<dbReference type="SUPFAM" id="SSF51445">
    <property type="entry name" value="(Trans)glycosidases"/>
    <property type="match status" value="1"/>
</dbReference>
<organism>
    <name type="scientific">Pasteurella multocida (strain Pm70)</name>
    <dbReference type="NCBI Taxonomy" id="272843"/>
    <lineage>
        <taxon>Bacteria</taxon>
        <taxon>Pseudomonadati</taxon>
        <taxon>Pseudomonadota</taxon>
        <taxon>Gammaproteobacteria</taxon>
        <taxon>Pasteurellales</taxon>
        <taxon>Pasteurellaceae</taxon>
        <taxon>Pasteurella</taxon>
    </lineage>
</organism>
<name>NAGZ_PASMU</name>